<keyword id="KW-0119">Carbohydrate metabolism</keyword>
<keyword id="KW-0378">Hydrolase</keyword>
<keyword id="KW-0460">Magnesium</keyword>
<keyword id="KW-0479">Metal-binding</keyword>
<accession>Q724M2</accession>
<dbReference type="EC" id="3.5.1.-" evidence="1"/>
<dbReference type="EMBL" id="AE017262">
    <property type="protein sequence ID" value="AAT02989.1"/>
    <property type="molecule type" value="Genomic_DNA"/>
</dbReference>
<dbReference type="SMR" id="Q724M2"/>
<dbReference type="KEGG" id="lmf:LMOf2365_0202"/>
<dbReference type="HOGENOM" id="CLU_064244_4_0_9"/>
<dbReference type="GO" id="GO:0019213">
    <property type="term" value="F:deacetylase activity"/>
    <property type="evidence" value="ECO:0007669"/>
    <property type="project" value="TreeGrafter"/>
</dbReference>
<dbReference type="GO" id="GO:0016811">
    <property type="term" value="F:hydrolase activity, acting on carbon-nitrogen (but not peptide) bonds, in linear amides"/>
    <property type="evidence" value="ECO:0007669"/>
    <property type="project" value="UniProtKB-UniRule"/>
</dbReference>
<dbReference type="GO" id="GO:0046872">
    <property type="term" value="F:metal ion binding"/>
    <property type="evidence" value="ECO:0007669"/>
    <property type="project" value="UniProtKB-KW"/>
</dbReference>
<dbReference type="GO" id="GO:0000272">
    <property type="term" value="P:polysaccharide catabolic process"/>
    <property type="evidence" value="ECO:0007669"/>
    <property type="project" value="InterPro"/>
</dbReference>
<dbReference type="CDD" id="cd10803">
    <property type="entry name" value="YdjC_EF3048_like"/>
    <property type="match status" value="1"/>
</dbReference>
<dbReference type="FunFam" id="3.20.20.370:FF:000010">
    <property type="entry name" value="Carbohydrate deacetylase"/>
    <property type="match status" value="1"/>
</dbReference>
<dbReference type="Gene3D" id="3.20.20.370">
    <property type="entry name" value="Glycoside hydrolase/deacetylase"/>
    <property type="match status" value="1"/>
</dbReference>
<dbReference type="HAMAP" id="MF_01246">
    <property type="entry name" value="COD"/>
    <property type="match status" value="1"/>
</dbReference>
<dbReference type="InterPro" id="IPR022948">
    <property type="entry name" value="COD_ChbG_bac"/>
</dbReference>
<dbReference type="InterPro" id="IPR011330">
    <property type="entry name" value="Glyco_hydro/deAcase_b/a-brl"/>
</dbReference>
<dbReference type="InterPro" id="IPR006879">
    <property type="entry name" value="YdjC-like"/>
</dbReference>
<dbReference type="NCBIfam" id="NF002559">
    <property type="entry name" value="PRK02134.1"/>
    <property type="match status" value="1"/>
</dbReference>
<dbReference type="PANTHER" id="PTHR31609:SF1">
    <property type="entry name" value="CARBOHYDRATE DEACETYLASE"/>
    <property type="match status" value="1"/>
</dbReference>
<dbReference type="PANTHER" id="PTHR31609">
    <property type="entry name" value="YDJC DEACETYLASE FAMILY MEMBER"/>
    <property type="match status" value="1"/>
</dbReference>
<dbReference type="Pfam" id="PF04794">
    <property type="entry name" value="YdjC"/>
    <property type="match status" value="1"/>
</dbReference>
<dbReference type="SUPFAM" id="SSF88713">
    <property type="entry name" value="Glycoside hydrolase/deacetylase"/>
    <property type="match status" value="1"/>
</dbReference>
<reference key="1">
    <citation type="journal article" date="2004" name="Nucleic Acids Res.">
        <title>Whole genome comparisons of serotype 4b and 1/2a strains of the food-borne pathogen Listeria monocytogenes reveal new insights into the core genome components of this species.</title>
        <authorList>
            <person name="Nelson K.E."/>
            <person name="Fouts D.E."/>
            <person name="Mongodin E.F."/>
            <person name="Ravel J."/>
            <person name="DeBoy R.T."/>
            <person name="Kolonay J.F."/>
            <person name="Rasko D.A."/>
            <person name="Angiuoli S.V."/>
            <person name="Gill S.R."/>
            <person name="Paulsen I.T."/>
            <person name="Peterson J.D."/>
            <person name="White O."/>
            <person name="Nelson W.C."/>
            <person name="Nierman W.C."/>
            <person name="Beanan M.J."/>
            <person name="Brinkac L.M."/>
            <person name="Daugherty S.C."/>
            <person name="Dodson R.J."/>
            <person name="Durkin A.S."/>
            <person name="Madupu R."/>
            <person name="Haft D.H."/>
            <person name="Selengut J."/>
            <person name="Van Aken S.E."/>
            <person name="Khouri H.M."/>
            <person name="Fedorova N."/>
            <person name="Forberger H.A."/>
            <person name="Tran B."/>
            <person name="Kathariou S."/>
            <person name="Wonderling L.D."/>
            <person name="Uhlich G.A."/>
            <person name="Bayles D.O."/>
            <person name="Luchansky J.B."/>
            <person name="Fraser C.M."/>
        </authorList>
    </citation>
    <scope>NUCLEOTIDE SEQUENCE [LARGE SCALE GENOMIC DNA]</scope>
    <source>
        <strain>F2365</strain>
    </source>
</reference>
<proteinExistence type="inferred from homology"/>
<gene>
    <name type="ordered locus">LMOf2365_0202</name>
</gene>
<comment type="function">
    <text evidence="1">Probably catalyzes the deacetylation of acetylated carbohydrates an important step in the degradation of oligosaccharides.</text>
</comment>
<comment type="cofactor">
    <cofactor evidence="1">
        <name>Mg(2+)</name>
        <dbReference type="ChEBI" id="CHEBI:18420"/>
    </cofactor>
</comment>
<comment type="subunit">
    <text evidence="1">Homodimer.</text>
</comment>
<comment type="similarity">
    <text evidence="1">Belongs to the YdjC deacetylase family.</text>
</comment>
<sequence length="245" mass="27301">MKIIFNADDFGISPGAVYGILESYKRGVVKSTTLLANSPAFDLAVEVAKENPGLDIGAHLTLTFGSPVLQGLETLTDDDGRFRRNYTSLENGLADVDMNEVERELTAQIEKILDAGITISHFDTHHSIEPLIYPVQHKLAEKYGVSIRRHSDVSDFGAIKTPDLFATEFYADGVSFETIKKLVQKHIGTNDVVEVMTHPAFIDETLREISSYVEPRIKEVSILTSRELQAYLGQQEVEIISFRDL</sequence>
<organism>
    <name type="scientific">Listeria monocytogenes serotype 4b (strain F2365)</name>
    <dbReference type="NCBI Taxonomy" id="265669"/>
    <lineage>
        <taxon>Bacteria</taxon>
        <taxon>Bacillati</taxon>
        <taxon>Bacillota</taxon>
        <taxon>Bacilli</taxon>
        <taxon>Bacillales</taxon>
        <taxon>Listeriaceae</taxon>
        <taxon>Listeria</taxon>
    </lineage>
</organism>
<feature type="chain" id="PRO_0000051595" description="Carbohydrate deacetylase">
    <location>
        <begin position="1"/>
        <end position="245"/>
    </location>
</feature>
<feature type="binding site" evidence="1">
    <location>
        <position position="59"/>
    </location>
    <ligand>
        <name>Mg(2+)</name>
        <dbReference type="ChEBI" id="CHEBI:18420"/>
    </ligand>
</feature>
<feature type="binding site" evidence="1">
    <location>
        <position position="125"/>
    </location>
    <ligand>
        <name>Mg(2+)</name>
        <dbReference type="ChEBI" id="CHEBI:18420"/>
    </ligand>
</feature>
<evidence type="ECO:0000255" key="1">
    <source>
        <dbReference type="HAMAP-Rule" id="MF_01246"/>
    </source>
</evidence>
<protein>
    <recommendedName>
        <fullName evidence="1">Carbohydrate deacetylase</fullName>
        <ecNumber evidence="1">3.5.1.-</ecNumber>
    </recommendedName>
</protein>
<name>YDJC_LISMF</name>